<accession>B5XLZ0</accession>
<keyword id="KW-0963">Cytoplasm</keyword>
<keyword id="KW-0342">GTP-binding</keyword>
<keyword id="KW-0378">Hydrolase</keyword>
<keyword id="KW-0460">Magnesium</keyword>
<keyword id="KW-0479">Metal-binding</keyword>
<keyword id="KW-0547">Nucleotide-binding</keyword>
<reference key="1">
    <citation type="journal article" date="2008" name="J. Bacteriol.">
        <title>Genome sequence of a nephritogenic and highly transformable M49 strain of Streptococcus pyogenes.</title>
        <authorList>
            <person name="McShan W.M."/>
            <person name="Ferretti J.J."/>
            <person name="Karasawa T."/>
            <person name="Suvorov A.N."/>
            <person name="Lin S."/>
            <person name="Qin B."/>
            <person name="Jia H."/>
            <person name="Kenton S."/>
            <person name="Najar F."/>
            <person name="Wu H."/>
            <person name="Scott J."/>
            <person name="Roe B.A."/>
            <person name="Savic D.J."/>
        </authorList>
    </citation>
    <scope>NUCLEOTIDE SEQUENCE [LARGE SCALE GENOMIC DNA]</scope>
    <source>
        <strain>NZ131</strain>
    </source>
</reference>
<sequence>MSMFLDTAKISVQAGRGGDGMVAFRREKYVPNGGPWGGDGGKGGSVIFRVDEGLRTLMDFRYNRKFKAKSGEKGMTKGMHGRGAEDLIVFVPQGTTVRDAETGKVITDLVEHGQEVVIAKGGRGGRGNIRFATPRNPAPEIAENGEPGEERQLELELKILADVGLVGFPSVGKSTLLSVVSSAKPKIGAYHFTTIVPNLGMVRTKSGDSFAMADLPGLIEGASQGVGLGTQFLRHIERTRVILHVIDMSASEGRDPYEDYVSINNELETYNLRLMERPQIIVANKMDMPEAQENLKAFKKKLAAQYDEFDDLPMIFPISSLAHQGLDNLLEATAELLAKTDEFLLYDEADLVDEEAYYGFAETEKNFEIIRDDDATWVLSGEKLERLFVMTNMERDESIMKFARQLRGMGVDEALRERGAKDGDLVRIGKFEFEFVD</sequence>
<comment type="function">
    <text evidence="1">An essential GTPase which binds GTP, GDP and possibly (p)ppGpp with moderate affinity, with high nucleotide exchange rates and a fairly low GTP hydrolysis rate. Plays a role in control of the cell cycle, stress response, ribosome biogenesis and in those bacteria that undergo differentiation, in morphogenesis control.</text>
</comment>
<comment type="cofactor">
    <cofactor evidence="1">
        <name>Mg(2+)</name>
        <dbReference type="ChEBI" id="CHEBI:18420"/>
    </cofactor>
</comment>
<comment type="subunit">
    <text evidence="1">Monomer.</text>
</comment>
<comment type="subcellular location">
    <subcellularLocation>
        <location evidence="1">Cytoplasm</location>
    </subcellularLocation>
</comment>
<comment type="similarity">
    <text evidence="1">Belongs to the TRAFAC class OBG-HflX-like GTPase superfamily. OBG GTPase family.</text>
</comment>
<evidence type="ECO:0000255" key="1">
    <source>
        <dbReference type="HAMAP-Rule" id="MF_01454"/>
    </source>
</evidence>
<evidence type="ECO:0000255" key="2">
    <source>
        <dbReference type="PROSITE-ProRule" id="PRU01229"/>
    </source>
</evidence>
<evidence type="ECO:0000255" key="3">
    <source>
        <dbReference type="PROSITE-ProRule" id="PRU01231"/>
    </source>
</evidence>
<proteinExistence type="inferred from homology"/>
<protein>
    <recommendedName>
        <fullName evidence="1">GTPase Obg</fullName>
        <ecNumber evidence="1">3.6.5.-</ecNumber>
    </recommendedName>
    <alternativeName>
        <fullName evidence="1">GTP-binding protein Obg</fullName>
    </alternativeName>
</protein>
<gene>
    <name evidence="1" type="primary">obg</name>
    <name type="ordered locus">Spy49_1053c</name>
</gene>
<organism>
    <name type="scientific">Streptococcus pyogenes serotype M49 (strain NZ131)</name>
    <dbReference type="NCBI Taxonomy" id="471876"/>
    <lineage>
        <taxon>Bacteria</taxon>
        <taxon>Bacillati</taxon>
        <taxon>Bacillota</taxon>
        <taxon>Bacilli</taxon>
        <taxon>Lactobacillales</taxon>
        <taxon>Streptococcaceae</taxon>
        <taxon>Streptococcus</taxon>
    </lineage>
</organism>
<name>OBG_STRPZ</name>
<dbReference type="EC" id="3.6.5.-" evidence="1"/>
<dbReference type="EMBL" id="CP000829">
    <property type="protein sequence ID" value="ACI61352.1"/>
    <property type="molecule type" value="Genomic_DNA"/>
</dbReference>
<dbReference type="SMR" id="B5XLZ0"/>
<dbReference type="KEGG" id="soz:Spy49_1053c"/>
<dbReference type="HOGENOM" id="CLU_011747_2_1_9"/>
<dbReference type="Proteomes" id="UP000001039">
    <property type="component" value="Chromosome"/>
</dbReference>
<dbReference type="GO" id="GO:0005737">
    <property type="term" value="C:cytoplasm"/>
    <property type="evidence" value="ECO:0007669"/>
    <property type="project" value="UniProtKB-SubCell"/>
</dbReference>
<dbReference type="GO" id="GO:0005525">
    <property type="term" value="F:GTP binding"/>
    <property type="evidence" value="ECO:0007669"/>
    <property type="project" value="UniProtKB-UniRule"/>
</dbReference>
<dbReference type="GO" id="GO:0003924">
    <property type="term" value="F:GTPase activity"/>
    <property type="evidence" value="ECO:0007669"/>
    <property type="project" value="UniProtKB-UniRule"/>
</dbReference>
<dbReference type="GO" id="GO:0000287">
    <property type="term" value="F:magnesium ion binding"/>
    <property type="evidence" value="ECO:0007669"/>
    <property type="project" value="InterPro"/>
</dbReference>
<dbReference type="GO" id="GO:0042254">
    <property type="term" value="P:ribosome biogenesis"/>
    <property type="evidence" value="ECO:0007669"/>
    <property type="project" value="UniProtKB-UniRule"/>
</dbReference>
<dbReference type="CDD" id="cd01898">
    <property type="entry name" value="Obg"/>
    <property type="match status" value="1"/>
</dbReference>
<dbReference type="FunFam" id="2.70.210.12:FF:000001">
    <property type="entry name" value="GTPase Obg"/>
    <property type="match status" value="1"/>
</dbReference>
<dbReference type="FunFam" id="3.40.50.300:FF:000515">
    <property type="entry name" value="GTPase Obg"/>
    <property type="match status" value="1"/>
</dbReference>
<dbReference type="Gene3D" id="3.30.300.350">
    <property type="entry name" value="GTP-binding protein OBG, C-terminal domain"/>
    <property type="match status" value="1"/>
</dbReference>
<dbReference type="Gene3D" id="2.70.210.12">
    <property type="entry name" value="GTP1/OBG domain"/>
    <property type="match status" value="1"/>
</dbReference>
<dbReference type="Gene3D" id="3.40.50.300">
    <property type="entry name" value="P-loop containing nucleotide triphosphate hydrolases"/>
    <property type="match status" value="1"/>
</dbReference>
<dbReference type="HAMAP" id="MF_01454">
    <property type="entry name" value="GTPase_Obg"/>
    <property type="match status" value="1"/>
</dbReference>
<dbReference type="InterPro" id="IPR031167">
    <property type="entry name" value="G_OBG"/>
</dbReference>
<dbReference type="InterPro" id="IPR006073">
    <property type="entry name" value="GTP-bd"/>
</dbReference>
<dbReference type="InterPro" id="IPR014100">
    <property type="entry name" value="GTP-bd_Obg/CgtA"/>
</dbReference>
<dbReference type="InterPro" id="IPR036346">
    <property type="entry name" value="GTP-bd_prot_GTP1/OBG_C_sf"/>
</dbReference>
<dbReference type="InterPro" id="IPR006074">
    <property type="entry name" value="GTP1-OBG_CS"/>
</dbReference>
<dbReference type="InterPro" id="IPR006169">
    <property type="entry name" value="GTP1_OBG_dom"/>
</dbReference>
<dbReference type="InterPro" id="IPR036726">
    <property type="entry name" value="GTP1_OBG_dom_sf"/>
</dbReference>
<dbReference type="InterPro" id="IPR045086">
    <property type="entry name" value="OBG_GTPase"/>
</dbReference>
<dbReference type="InterPro" id="IPR015349">
    <property type="entry name" value="OCT_dom"/>
</dbReference>
<dbReference type="InterPro" id="IPR027417">
    <property type="entry name" value="P-loop_NTPase"/>
</dbReference>
<dbReference type="InterPro" id="IPR005225">
    <property type="entry name" value="Small_GTP-bd"/>
</dbReference>
<dbReference type="NCBIfam" id="TIGR02729">
    <property type="entry name" value="Obg_CgtA"/>
    <property type="match status" value="1"/>
</dbReference>
<dbReference type="NCBIfam" id="TIGR03595">
    <property type="entry name" value="Obg_CgtA_exten"/>
    <property type="match status" value="1"/>
</dbReference>
<dbReference type="NCBIfam" id="NF008954">
    <property type="entry name" value="PRK12296.1"/>
    <property type="match status" value="1"/>
</dbReference>
<dbReference type="NCBIfam" id="NF008955">
    <property type="entry name" value="PRK12297.1"/>
    <property type="match status" value="1"/>
</dbReference>
<dbReference type="NCBIfam" id="NF008956">
    <property type="entry name" value="PRK12299.1"/>
    <property type="match status" value="1"/>
</dbReference>
<dbReference type="NCBIfam" id="TIGR00231">
    <property type="entry name" value="small_GTP"/>
    <property type="match status" value="1"/>
</dbReference>
<dbReference type="PANTHER" id="PTHR11702">
    <property type="entry name" value="DEVELOPMENTALLY REGULATED GTP-BINDING PROTEIN-RELATED"/>
    <property type="match status" value="1"/>
</dbReference>
<dbReference type="PANTHER" id="PTHR11702:SF31">
    <property type="entry name" value="MITOCHONDRIAL RIBOSOME-ASSOCIATED GTPASE 2"/>
    <property type="match status" value="1"/>
</dbReference>
<dbReference type="Pfam" id="PF09269">
    <property type="entry name" value="DUF1967"/>
    <property type="match status" value="1"/>
</dbReference>
<dbReference type="Pfam" id="PF01018">
    <property type="entry name" value="GTP1_OBG"/>
    <property type="match status" value="1"/>
</dbReference>
<dbReference type="Pfam" id="PF01926">
    <property type="entry name" value="MMR_HSR1"/>
    <property type="match status" value="1"/>
</dbReference>
<dbReference type="PIRSF" id="PIRSF002401">
    <property type="entry name" value="GTP_bd_Obg/CgtA"/>
    <property type="match status" value="1"/>
</dbReference>
<dbReference type="PRINTS" id="PR00326">
    <property type="entry name" value="GTP1OBG"/>
</dbReference>
<dbReference type="SUPFAM" id="SSF102741">
    <property type="entry name" value="Obg GTP-binding protein C-terminal domain"/>
    <property type="match status" value="1"/>
</dbReference>
<dbReference type="SUPFAM" id="SSF82051">
    <property type="entry name" value="Obg GTP-binding protein N-terminal domain"/>
    <property type="match status" value="1"/>
</dbReference>
<dbReference type="SUPFAM" id="SSF52540">
    <property type="entry name" value="P-loop containing nucleoside triphosphate hydrolases"/>
    <property type="match status" value="1"/>
</dbReference>
<dbReference type="PROSITE" id="PS51710">
    <property type="entry name" value="G_OBG"/>
    <property type="match status" value="1"/>
</dbReference>
<dbReference type="PROSITE" id="PS00905">
    <property type="entry name" value="GTP1_OBG"/>
    <property type="match status" value="1"/>
</dbReference>
<dbReference type="PROSITE" id="PS51883">
    <property type="entry name" value="OBG"/>
    <property type="match status" value="1"/>
</dbReference>
<dbReference type="PROSITE" id="PS51881">
    <property type="entry name" value="OCT"/>
    <property type="match status" value="1"/>
</dbReference>
<feature type="chain" id="PRO_0000386312" description="GTPase Obg">
    <location>
        <begin position="1"/>
        <end position="437"/>
    </location>
</feature>
<feature type="domain" description="Obg" evidence="3">
    <location>
        <begin position="2"/>
        <end position="160"/>
    </location>
</feature>
<feature type="domain" description="OBG-type G" evidence="1">
    <location>
        <begin position="161"/>
        <end position="338"/>
    </location>
</feature>
<feature type="domain" description="OCT" evidence="2">
    <location>
        <begin position="359"/>
        <end position="437"/>
    </location>
</feature>
<feature type="binding site" evidence="1">
    <location>
        <begin position="167"/>
        <end position="174"/>
    </location>
    <ligand>
        <name>GTP</name>
        <dbReference type="ChEBI" id="CHEBI:37565"/>
    </ligand>
</feature>
<feature type="binding site" evidence="1">
    <location>
        <position position="174"/>
    </location>
    <ligand>
        <name>Mg(2+)</name>
        <dbReference type="ChEBI" id="CHEBI:18420"/>
    </ligand>
</feature>
<feature type="binding site" evidence="1">
    <location>
        <begin position="192"/>
        <end position="196"/>
    </location>
    <ligand>
        <name>GTP</name>
        <dbReference type="ChEBI" id="CHEBI:37565"/>
    </ligand>
</feature>
<feature type="binding site" evidence="1">
    <location>
        <position position="194"/>
    </location>
    <ligand>
        <name>Mg(2+)</name>
        <dbReference type="ChEBI" id="CHEBI:18420"/>
    </ligand>
</feature>
<feature type="binding site" evidence="1">
    <location>
        <begin position="214"/>
        <end position="217"/>
    </location>
    <ligand>
        <name>GTP</name>
        <dbReference type="ChEBI" id="CHEBI:37565"/>
    </ligand>
</feature>
<feature type="binding site" evidence="1">
    <location>
        <begin position="284"/>
        <end position="287"/>
    </location>
    <ligand>
        <name>GTP</name>
        <dbReference type="ChEBI" id="CHEBI:37565"/>
    </ligand>
</feature>
<feature type="binding site" evidence="1">
    <location>
        <begin position="319"/>
        <end position="321"/>
    </location>
    <ligand>
        <name>GTP</name>
        <dbReference type="ChEBI" id="CHEBI:37565"/>
    </ligand>
</feature>